<gene>
    <name evidence="1" type="primary">matP</name>
    <name type="ordered locus">HI_1323</name>
</gene>
<accession>P44161</accession>
<dbReference type="EMBL" id="L42023">
    <property type="protein sequence ID" value="AAC22968.1"/>
    <property type="molecule type" value="Genomic_DNA"/>
</dbReference>
<dbReference type="PIR" id="H64025">
    <property type="entry name" value="H64025"/>
</dbReference>
<dbReference type="RefSeq" id="NP_439474.1">
    <property type="nucleotide sequence ID" value="NC_000907.1"/>
</dbReference>
<dbReference type="SMR" id="P44161"/>
<dbReference type="STRING" id="71421.HI_1323"/>
<dbReference type="EnsemblBacteria" id="AAC22968">
    <property type="protein sequence ID" value="AAC22968"/>
    <property type="gene ID" value="HI_1323"/>
</dbReference>
<dbReference type="KEGG" id="hin:HI_1323"/>
<dbReference type="PATRIC" id="fig|71421.8.peg.1375"/>
<dbReference type="eggNOG" id="COG3120">
    <property type="taxonomic scope" value="Bacteria"/>
</dbReference>
<dbReference type="HOGENOM" id="CLU_142157_0_0_6"/>
<dbReference type="OrthoDB" id="5814691at2"/>
<dbReference type="PhylomeDB" id="P44161"/>
<dbReference type="BioCyc" id="HINF71421:G1GJ1-1348-MONOMER"/>
<dbReference type="Proteomes" id="UP000000579">
    <property type="component" value="Chromosome"/>
</dbReference>
<dbReference type="GO" id="GO:0005737">
    <property type="term" value="C:cytoplasm"/>
    <property type="evidence" value="ECO:0007669"/>
    <property type="project" value="UniProtKB-SubCell"/>
</dbReference>
<dbReference type="GO" id="GO:0043565">
    <property type="term" value="F:sequence-specific DNA binding"/>
    <property type="evidence" value="ECO:0007669"/>
    <property type="project" value="UniProtKB-UniRule"/>
</dbReference>
<dbReference type="GO" id="GO:0051301">
    <property type="term" value="P:cell division"/>
    <property type="evidence" value="ECO:0007669"/>
    <property type="project" value="UniProtKB-UniRule"/>
</dbReference>
<dbReference type="GO" id="GO:0006355">
    <property type="term" value="P:regulation of DNA-templated transcription"/>
    <property type="evidence" value="ECO:0007669"/>
    <property type="project" value="InterPro"/>
</dbReference>
<dbReference type="Gene3D" id="1.20.1270.380">
    <property type="entry name" value="MatP, N-terminal domain"/>
    <property type="match status" value="1"/>
</dbReference>
<dbReference type="Gene3D" id="1.10.1220.10">
    <property type="entry name" value="Met repressor-like"/>
    <property type="match status" value="1"/>
</dbReference>
<dbReference type="HAMAP" id="MF_01073">
    <property type="entry name" value="MatP"/>
    <property type="match status" value="1"/>
</dbReference>
<dbReference type="InterPro" id="IPR013321">
    <property type="entry name" value="Arc_rbn_hlx_hlx"/>
</dbReference>
<dbReference type="InterPro" id="IPR009390">
    <property type="entry name" value="MatP"/>
</dbReference>
<dbReference type="InterPro" id="IPR035375">
    <property type="entry name" value="MatP_C"/>
</dbReference>
<dbReference type="InterPro" id="IPR035087">
    <property type="entry name" value="MatP_N"/>
</dbReference>
<dbReference type="InterPro" id="IPR038339">
    <property type="entry name" value="MatP_N_sf"/>
</dbReference>
<dbReference type="NCBIfam" id="NF003471">
    <property type="entry name" value="PRK05097.1"/>
    <property type="match status" value="1"/>
</dbReference>
<dbReference type="Pfam" id="PF06303">
    <property type="entry name" value="MatP"/>
    <property type="match status" value="1"/>
</dbReference>
<dbReference type="Pfam" id="PF17414">
    <property type="entry name" value="MatP_C"/>
    <property type="match status" value="1"/>
</dbReference>
<protein>
    <recommendedName>
        <fullName evidence="1">Macrodomain Ter protein</fullName>
    </recommendedName>
</protein>
<feature type="chain" id="PRO_0000070351" description="Macrodomain Ter protein">
    <location>
        <begin position="1"/>
        <end position="148"/>
    </location>
</feature>
<organism>
    <name type="scientific">Haemophilus influenzae (strain ATCC 51907 / DSM 11121 / KW20 / Rd)</name>
    <dbReference type="NCBI Taxonomy" id="71421"/>
    <lineage>
        <taxon>Bacteria</taxon>
        <taxon>Pseudomonadati</taxon>
        <taxon>Pseudomonadota</taxon>
        <taxon>Gammaproteobacteria</taxon>
        <taxon>Pasteurellales</taxon>
        <taxon>Pasteurellaceae</taxon>
        <taxon>Haemophilus</taxon>
    </lineage>
</organism>
<name>MATP_HAEIN</name>
<comment type="function">
    <text evidence="1">Required for spatial organization of the terminus region of the chromosome (Ter macrodomain) during the cell cycle. Prevents early segregation of duplicated Ter macrodomains during cell division. Binds specifically to matS, which is a 13 bp signature motif repeated within the Ter macrodomain.</text>
</comment>
<comment type="subunit">
    <text evidence="1">Homodimer.</text>
</comment>
<comment type="subcellular location">
    <subcellularLocation>
        <location evidence="1">Cytoplasm</location>
    </subcellularLocation>
</comment>
<comment type="similarity">
    <text evidence="1">Belongs to the MatP family.</text>
</comment>
<evidence type="ECO:0000255" key="1">
    <source>
        <dbReference type="HAMAP-Rule" id="MF_01073"/>
    </source>
</evidence>
<reference key="1">
    <citation type="journal article" date="1995" name="Science">
        <title>Whole-genome random sequencing and assembly of Haemophilus influenzae Rd.</title>
        <authorList>
            <person name="Fleischmann R.D."/>
            <person name="Adams M.D."/>
            <person name="White O."/>
            <person name="Clayton R.A."/>
            <person name="Kirkness E.F."/>
            <person name="Kerlavage A.R."/>
            <person name="Bult C.J."/>
            <person name="Tomb J.-F."/>
            <person name="Dougherty B.A."/>
            <person name="Merrick J.M."/>
            <person name="McKenney K."/>
            <person name="Sutton G.G."/>
            <person name="FitzHugh W."/>
            <person name="Fields C.A."/>
            <person name="Gocayne J.D."/>
            <person name="Scott J.D."/>
            <person name="Shirley R."/>
            <person name="Liu L.-I."/>
            <person name="Glodek A."/>
            <person name="Kelley J.M."/>
            <person name="Weidman J.F."/>
            <person name="Phillips C.A."/>
            <person name="Spriggs T."/>
            <person name="Hedblom E."/>
            <person name="Cotton M.D."/>
            <person name="Utterback T.R."/>
            <person name="Hanna M.C."/>
            <person name="Nguyen D.T."/>
            <person name="Saudek D.M."/>
            <person name="Brandon R.C."/>
            <person name="Fine L.D."/>
            <person name="Fritchman J.L."/>
            <person name="Fuhrmann J.L."/>
            <person name="Geoghagen N.S.M."/>
            <person name="Gnehm C.L."/>
            <person name="McDonald L.A."/>
            <person name="Small K.V."/>
            <person name="Fraser C.M."/>
            <person name="Smith H.O."/>
            <person name="Venter J.C."/>
        </authorList>
    </citation>
    <scope>NUCLEOTIDE SEQUENCE [LARGE SCALE GENOMIC DNA]</scope>
    <source>
        <strain>ATCC 51907 / DSM 11121 / KW20 / Rd</strain>
    </source>
</reference>
<keyword id="KW-0131">Cell cycle</keyword>
<keyword id="KW-0132">Cell division</keyword>
<keyword id="KW-0963">Cytoplasm</keyword>
<keyword id="KW-0238">DNA-binding</keyword>
<keyword id="KW-1185">Reference proteome</keyword>
<sequence>MKYQKLENQEANWKWIYLIRKHREGENITRYEERSLQEAKAQELLESQNYPEKIEEWIKNHLSPALPIKLDQAIRARRKRFFNGEKQHTKKKSIDLEYAVWLRLSKYSRKMKMTLSETITYMIDERESKAQFENQMAAMKTSLKNLLK</sequence>
<proteinExistence type="inferred from homology"/>